<dbReference type="EC" id="3.4.24.39"/>
<dbReference type="EMBL" id="KN275957">
    <property type="protein sequence ID" value="EEH44487.2"/>
    <property type="status" value="ALT_SEQ"/>
    <property type="molecule type" value="Genomic_DNA"/>
</dbReference>
<dbReference type="RefSeq" id="XP_010755974.1">
    <property type="nucleotide sequence ID" value="XM_010757672.1"/>
</dbReference>
<dbReference type="SMR" id="C1G1N6"/>
<dbReference type="STRING" id="502780.C1G1N6"/>
<dbReference type="MEROPS" id="M35.002"/>
<dbReference type="GeneID" id="22580559"/>
<dbReference type="KEGG" id="pbn:PADG_00776"/>
<dbReference type="eggNOG" id="ENOG502SGF5">
    <property type="taxonomic scope" value="Eukaryota"/>
</dbReference>
<dbReference type="HOGENOM" id="CLU_039313_1_1_1"/>
<dbReference type="InParanoid" id="C1G1N6"/>
<dbReference type="OrthoDB" id="33573at33183"/>
<dbReference type="BRENDA" id="3.4.24.39">
    <property type="organism ID" value="6937"/>
</dbReference>
<dbReference type="Proteomes" id="UP000001628">
    <property type="component" value="Unassembled WGS sequence"/>
</dbReference>
<dbReference type="GO" id="GO:0005576">
    <property type="term" value="C:extracellular region"/>
    <property type="evidence" value="ECO:0007669"/>
    <property type="project" value="UniProtKB-SubCell"/>
</dbReference>
<dbReference type="GO" id="GO:0046872">
    <property type="term" value="F:metal ion binding"/>
    <property type="evidence" value="ECO:0007669"/>
    <property type="project" value="UniProtKB-KW"/>
</dbReference>
<dbReference type="GO" id="GO:0004222">
    <property type="term" value="F:metalloendopeptidase activity"/>
    <property type="evidence" value="ECO:0007669"/>
    <property type="project" value="InterPro"/>
</dbReference>
<dbReference type="GO" id="GO:0006508">
    <property type="term" value="P:proteolysis"/>
    <property type="evidence" value="ECO:0007669"/>
    <property type="project" value="UniProtKB-KW"/>
</dbReference>
<dbReference type="CDD" id="cd11008">
    <property type="entry name" value="M35_deuterolysin_like"/>
    <property type="match status" value="1"/>
</dbReference>
<dbReference type="Gene3D" id="2.60.40.2970">
    <property type="match status" value="1"/>
</dbReference>
<dbReference type="Gene3D" id="3.40.390.10">
    <property type="entry name" value="Collagenase (Catalytic Domain)"/>
    <property type="match status" value="1"/>
</dbReference>
<dbReference type="InterPro" id="IPR050414">
    <property type="entry name" value="Fungal_M35_metalloproteases"/>
</dbReference>
<dbReference type="InterPro" id="IPR029463">
    <property type="entry name" value="Lys_MEP"/>
</dbReference>
<dbReference type="InterPro" id="IPR024079">
    <property type="entry name" value="MetalloPept_cat_dom_sf"/>
</dbReference>
<dbReference type="InterPro" id="IPR001384">
    <property type="entry name" value="Peptidase_M35"/>
</dbReference>
<dbReference type="PANTHER" id="PTHR37016">
    <property type="match status" value="1"/>
</dbReference>
<dbReference type="PANTHER" id="PTHR37016:SF7">
    <property type="entry name" value="NEUTRAL PROTEASE 2"/>
    <property type="match status" value="1"/>
</dbReference>
<dbReference type="Pfam" id="PF02102">
    <property type="entry name" value="Peptidase_M35"/>
    <property type="match status" value="1"/>
</dbReference>
<dbReference type="PRINTS" id="PR00768">
    <property type="entry name" value="DEUTEROLYSIN"/>
</dbReference>
<dbReference type="SMART" id="SM01351">
    <property type="entry name" value="Aspzincin_M35"/>
    <property type="match status" value="1"/>
</dbReference>
<dbReference type="SUPFAM" id="SSF55486">
    <property type="entry name" value="Metalloproteases ('zincins'), catalytic domain"/>
    <property type="match status" value="1"/>
</dbReference>
<dbReference type="PROSITE" id="PS00142">
    <property type="entry name" value="ZINC_PROTEASE"/>
    <property type="match status" value="1"/>
</dbReference>
<name>NPIIA_PARBD</name>
<evidence type="ECO:0000250" key="1"/>
<evidence type="ECO:0000255" key="2"/>
<evidence type="ECO:0000255" key="3">
    <source>
        <dbReference type="PROSITE-ProRule" id="PRU10095"/>
    </source>
</evidence>
<evidence type="ECO:0000305" key="4"/>
<sequence>MRRVSGILAVAAFTISAFAGVIQPVAKDARDSAELDVKLTQVDGTVIKAVVTNNGDKDLNILNLNFFRDTAPVKKVSIYSQGVEVPFGGIRVRHKTSDLSSDVITYLAPGESFEDEFDVAITSDLSQGGPVVLQTQGYVPTTDTGGKTLSGVVRYKSNKLEIDVDGTTAAKSFAAMNQFVKIAKLSSCEGSQGDDTRRALRDCASLSTLAAAQAWAGGPKMLEYFKANDDATRKLVADRFTAVALESSNLTGGSTTYYCRDPYNICTNNIIAYTIPAENLISNCPIYYTEFDNVNRKCHGQDRVTTSLHEFTHASSVFSPGTKDIAYGYNACILLSTRDALNNADTFALFAQSINAGC</sequence>
<proteinExistence type="inferred from homology"/>
<protein>
    <recommendedName>
        <fullName>Neutral protease 2 homolog PADG_00776</fullName>
        <ecNumber>3.4.24.39</ecNumber>
    </recommendedName>
    <alternativeName>
        <fullName>Deuterolysin PADG_00776</fullName>
    </alternativeName>
</protein>
<keyword id="KW-0165">Cleavage on pair of basic residues</keyword>
<keyword id="KW-1015">Disulfide bond</keyword>
<keyword id="KW-0325">Glycoprotein</keyword>
<keyword id="KW-0378">Hydrolase</keyword>
<keyword id="KW-0479">Metal-binding</keyword>
<keyword id="KW-0482">Metalloprotease</keyword>
<keyword id="KW-0645">Protease</keyword>
<keyword id="KW-1185">Reference proteome</keyword>
<keyword id="KW-0964">Secreted</keyword>
<keyword id="KW-0732">Signal</keyword>
<keyword id="KW-0862">Zinc</keyword>
<keyword id="KW-0865">Zymogen</keyword>
<reference key="1">
    <citation type="journal article" date="2011" name="PLoS Genet.">
        <title>Comparative genomic analysis of human fungal pathogens causing paracoccidioidomycosis.</title>
        <authorList>
            <person name="Desjardins C.A."/>
            <person name="Champion M.D."/>
            <person name="Holder J.W."/>
            <person name="Muszewska A."/>
            <person name="Goldberg J."/>
            <person name="Bailao A.M."/>
            <person name="Brigido M.M."/>
            <person name="Ferreira M.E."/>
            <person name="Garcia A.M."/>
            <person name="Grynberg M."/>
            <person name="Gujja S."/>
            <person name="Heiman D.I."/>
            <person name="Henn M.R."/>
            <person name="Kodira C.D."/>
            <person name="Leon-Narvaez H."/>
            <person name="Longo L.V.G."/>
            <person name="Ma L.-J."/>
            <person name="Malavazi I."/>
            <person name="Matsuo A.L."/>
            <person name="Morais F.V."/>
            <person name="Pereira M."/>
            <person name="Rodriguez-Brito S."/>
            <person name="Sakthikumar S."/>
            <person name="Salem-Izacc S.M."/>
            <person name="Sykes S.M."/>
            <person name="Teixeira M.M."/>
            <person name="Vallejo M.C."/>
            <person name="Walter M.E."/>
            <person name="Yandava C."/>
            <person name="Young S."/>
            <person name="Zeng Q."/>
            <person name="Zucker J."/>
            <person name="Felipe M.S."/>
            <person name="Goldman G.H."/>
            <person name="Haas B.J."/>
            <person name="McEwen J.G."/>
            <person name="Nino-Vega G."/>
            <person name="Puccia R."/>
            <person name="San-Blas G."/>
            <person name="Soares C.M."/>
            <person name="Birren B.W."/>
            <person name="Cuomo C.A."/>
        </authorList>
    </citation>
    <scope>NUCLEOTIDE SEQUENCE [LARGE SCALE GENOMIC DNA]</scope>
    <source>
        <strain>Pb18</strain>
    </source>
</reference>
<comment type="function">
    <text evidence="1">Secreted metalloproteinase that allows assimilation of proteinaceous substrates. Shows high activities on basic nuclear substrates such as histone and protamine (By similarity).</text>
</comment>
<comment type="catalytic activity">
    <reaction>
        <text>Preferential cleavage of bonds with hydrophobic residues in P1'. Also 3-Asn-|-Gln-4 and 8-Gly-|-Ser-9 bonds in insulin B chain.</text>
        <dbReference type="EC" id="3.4.24.39"/>
    </reaction>
</comment>
<comment type="cofactor">
    <cofactor evidence="1">
        <name>Zn(2+)</name>
        <dbReference type="ChEBI" id="CHEBI:29105"/>
    </cofactor>
    <text evidence="1">Binds 1 zinc ion per subunit.</text>
</comment>
<comment type="subcellular location">
    <subcellularLocation>
        <location evidence="1">Secreted</location>
    </subcellularLocation>
</comment>
<comment type="similarity">
    <text evidence="4">Belongs to the peptidase M35 family.</text>
</comment>
<comment type="sequence caution" evidence="4">
    <conflict type="erroneous gene model prediction">
        <sequence resource="EMBL-CDS" id="EEH44487"/>
    </conflict>
</comment>
<accession>C1G1N6</accession>
<gene>
    <name type="ORF">PADG_00776</name>
</gene>
<feature type="signal peptide" evidence="2">
    <location>
        <begin position="1"/>
        <end position="19"/>
    </location>
</feature>
<feature type="propeptide" id="PRO_0000407108" evidence="1">
    <location>
        <begin position="20"/>
        <end position="185"/>
    </location>
</feature>
<feature type="chain" id="PRO_0000407109" description="Neutral protease 2 homolog PADG_00776">
    <location>
        <begin position="186"/>
        <end position="358"/>
    </location>
</feature>
<feature type="active site" evidence="3">
    <location>
        <position position="310"/>
    </location>
</feature>
<feature type="binding site" evidence="3">
    <location>
        <position position="309"/>
    </location>
    <ligand>
        <name>Zn(2+)</name>
        <dbReference type="ChEBI" id="CHEBI:29105"/>
        <note>catalytic</note>
    </ligand>
</feature>
<feature type="binding site" evidence="3">
    <location>
        <position position="313"/>
    </location>
    <ligand>
        <name>Zn(2+)</name>
        <dbReference type="ChEBI" id="CHEBI:29105"/>
        <note>catalytic</note>
    </ligand>
</feature>
<feature type="binding site" evidence="3">
    <location>
        <position position="324"/>
    </location>
    <ligand>
        <name>Zn(2+)</name>
        <dbReference type="ChEBI" id="CHEBI:29105"/>
        <note>catalytic</note>
    </ligand>
</feature>
<feature type="glycosylation site" description="N-linked (GlcNAc...) asparagine" evidence="2">
    <location>
        <position position="249"/>
    </location>
</feature>
<feature type="disulfide bond" evidence="1">
    <location>
        <begin position="188"/>
        <end position="259"/>
    </location>
</feature>
<feature type="disulfide bond" evidence="1">
    <location>
        <begin position="266"/>
        <end position="284"/>
    </location>
</feature>
<organism>
    <name type="scientific">Paracoccidioides brasiliensis (strain Pb18)</name>
    <dbReference type="NCBI Taxonomy" id="502780"/>
    <lineage>
        <taxon>Eukaryota</taxon>
        <taxon>Fungi</taxon>
        <taxon>Dikarya</taxon>
        <taxon>Ascomycota</taxon>
        <taxon>Pezizomycotina</taxon>
        <taxon>Eurotiomycetes</taxon>
        <taxon>Eurotiomycetidae</taxon>
        <taxon>Onygenales</taxon>
        <taxon>Ajellomycetaceae</taxon>
        <taxon>Paracoccidioides</taxon>
    </lineage>
</organism>